<sequence length="282" mass="29284">MLLLQIVVLALIQGITEVLPLSSTGHLALLPLLTPWPSPTTWPDQGVALDVAVHLGTLGAVALYFWRDEAAMIGGCLRLLKGKRDPGARLAFLVVLGTLPAVATVLLLAHFAGPIASPGLATIGWTTLGFGLLLGVIDRLCMTVKRVEHMGGIDCLLIGLAQCLALLPGVSRTGVAMTAARLLGYERVESARFSMLLSIPAIAGAATLVGLDLARVGQSAMAPAALIAAVTAFLAAFLAVAAMMAWLRRHGFGPFVAYRVLLGAALLALAYLGPDLAPFLVS</sequence>
<organism>
    <name type="scientific">Rhodospirillum rubrum (strain ATCC 11170 / ATH 1.1.1 / DSM 467 / LMG 4362 / NCIMB 8255 / S1)</name>
    <dbReference type="NCBI Taxonomy" id="269796"/>
    <lineage>
        <taxon>Bacteria</taxon>
        <taxon>Pseudomonadati</taxon>
        <taxon>Pseudomonadota</taxon>
        <taxon>Alphaproteobacteria</taxon>
        <taxon>Rhodospirillales</taxon>
        <taxon>Rhodospirillaceae</taxon>
        <taxon>Rhodospirillum</taxon>
    </lineage>
</organism>
<feature type="chain" id="PRO_0000250258" description="Undecaprenyl-diphosphatase 1">
    <location>
        <begin position="1"/>
        <end position="282"/>
    </location>
</feature>
<feature type="transmembrane region" description="Helical" evidence="1">
    <location>
        <begin position="1"/>
        <end position="21"/>
    </location>
</feature>
<feature type="transmembrane region" description="Helical" evidence="1">
    <location>
        <begin position="46"/>
        <end position="66"/>
    </location>
</feature>
<feature type="transmembrane region" description="Helical" evidence="1">
    <location>
        <begin position="91"/>
        <end position="111"/>
    </location>
</feature>
<feature type="transmembrane region" description="Helical" evidence="1">
    <location>
        <begin position="117"/>
        <end position="137"/>
    </location>
</feature>
<feature type="transmembrane region" description="Helical" evidence="1">
    <location>
        <begin position="150"/>
        <end position="170"/>
    </location>
</feature>
<feature type="transmembrane region" description="Helical" evidence="1">
    <location>
        <begin position="193"/>
        <end position="213"/>
    </location>
</feature>
<feature type="transmembrane region" description="Helical" evidence="1">
    <location>
        <begin position="226"/>
        <end position="246"/>
    </location>
</feature>
<feature type="transmembrane region" description="Helical" evidence="1">
    <location>
        <begin position="260"/>
        <end position="280"/>
    </location>
</feature>
<protein>
    <recommendedName>
        <fullName evidence="1">Undecaprenyl-diphosphatase 1</fullName>
        <ecNumber evidence="1">3.6.1.27</ecNumber>
    </recommendedName>
    <alternativeName>
        <fullName evidence="1">Bacitracin resistance protein 1</fullName>
    </alternativeName>
    <alternativeName>
        <fullName evidence="1">Undecaprenyl pyrophosphate phosphatase 1</fullName>
    </alternativeName>
</protein>
<reference key="1">
    <citation type="journal article" date="2011" name="Stand. Genomic Sci.">
        <title>Complete genome sequence of Rhodospirillum rubrum type strain (S1).</title>
        <authorList>
            <person name="Munk A.C."/>
            <person name="Copeland A."/>
            <person name="Lucas S."/>
            <person name="Lapidus A."/>
            <person name="Del Rio T.G."/>
            <person name="Barry K."/>
            <person name="Detter J.C."/>
            <person name="Hammon N."/>
            <person name="Israni S."/>
            <person name="Pitluck S."/>
            <person name="Brettin T."/>
            <person name="Bruce D."/>
            <person name="Han C."/>
            <person name="Tapia R."/>
            <person name="Gilna P."/>
            <person name="Schmutz J."/>
            <person name="Larimer F."/>
            <person name="Land M."/>
            <person name="Kyrpides N.C."/>
            <person name="Mavromatis K."/>
            <person name="Richardson P."/>
            <person name="Rohde M."/>
            <person name="Goeker M."/>
            <person name="Klenk H.P."/>
            <person name="Zhang Y."/>
            <person name="Roberts G.P."/>
            <person name="Reslewic S."/>
            <person name="Schwartz D.C."/>
        </authorList>
    </citation>
    <scope>NUCLEOTIDE SEQUENCE [LARGE SCALE GENOMIC DNA]</scope>
    <source>
        <strain>ATCC 11170 / ATH 1.1.1 / DSM 467 / LMG 4362 / NCIMB 8255 / S1</strain>
    </source>
</reference>
<name>UPPP1_RHORT</name>
<comment type="function">
    <text evidence="1">Catalyzes the dephosphorylation of undecaprenyl diphosphate (UPP). Confers resistance to bacitracin.</text>
</comment>
<comment type="catalytic activity">
    <reaction evidence="1">
        <text>di-trans,octa-cis-undecaprenyl diphosphate + H2O = di-trans,octa-cis-undecaprenyl phosphate + phosphate + H(+)</text>
        <dbReference type="Rhea" id="RHEA:28094"/>
        <dbReference type="ChEBI" id="CHEBI:15377"/>
        <dbReference type="ChEBI" id="CHEBI:15378"/>
        <dbReference type="ChEBI" id="CHEBI:43474"/>
        <dbReference type="ChEBI" id="CHEBI:58405"/>
        <dbReference type="ChEBI" id="CHEBI:60392"/>
        <dbReference type="EC" id="3.6.1.27"/>
    </reaction>
</comment>
<comment type="subcellular location">
    <subcellularLocation>
        <location evidence="1">Cell inner membrane</location>
        <topology evidence="1">Multi-pass membrane protein</topology>
    </subcellularLocation>
</comment>
<comment type="miscellaneous">
    <text>Bacitracin is thought to be involved in the inhibition of peptidoglycan synthesis by sequestering undecaprenyl diphosphate, thereby reducing the pool of lipid carrier available.</text>
</comment>
<comment type="similarity">
    <text evidence="1">Belongs to the UppP family.</text>
</comment>
<dbReference type="EC" id="3.6.1.27" evidence="1"/>
<dbReference type="EMBL" id="CP000230">
    <property type="protein sequence ID" value="ABC20822.1"/>
    <property type="molecule type" value="Genomic_DNA"/>
</dbReference>
<dbReference type="RefSeq" id="WP_011387778.1">
    <property type="nucleotide sequence ID" value="NC_007643.1"/>
</dbReference>
<dbReference type="RefSeq" id="YP_425109.1">
    <property type="nucleotide sequence ID" value="NC_007643.1"/>
</dbReference>
<dbReference type="SMR" id="Q2RYH3"/>
<dbReference type="STRING" id="269796.Rru_A0017"/>
<dbReference type="EnsemblBacteria" id="ABC20822">
    <property type="protein sequence ID" value="ABC20822"/>
    <property type="gene ID" value="Rru_A0017"/>
</dbReference>
<dbReference type="KEGG" id="rru:Rru_A0017"/>
<dbReference type="PATRIC" id="fig|269796.9.peg.65"/>
<dbReference type="eggNOG" id="COG1968">
    <property type="taxonomic scope" value="Bacteria"/>
</dbReference>
<dbReference type="HOGENOM" id="CLU_060296_1_0_5"/>
<dbReference type="PhylomeDB" id="Q2RYH3"/>
<dbReference type="Proteomes" id="UP000001929">
    <property type="component" value="Chromosome"/>
</dbReference>
<dbReference type="GO" id="GO:0005886">
    <property type="term" value="C:plasma membrane"/>
    <property type="evidence" value="ECO:0007669"/>
    <property type="project" value="UniProtKB-SubCell"/>
</dbReference>
<dbReference type="GO" id="GO:0050380">
    <property type="term" value="F:undecaprenyl-diphosphatase activity"/>
    <property type="evidence" value="ECO:0007669"/>
    <property type="project" value="UniProtKB-UniRule"/>
</dbReference>
<dbReference type="GO" id="GO:0071555">
    <property type="term" value="P:cell wall organization"/>
    <property type="evidence" value="ECO:0007669"/>
    <property type="project" value="UniProtKB-KW"/>
</dbReference>
<dbReference type="GO" id="GO:0009252">
    <property type="term" value="P:peptidoglycan biosynthetic process"/>
    <property type="evidence" value="ECO:0007669"/>
    <property type="project" value="UniProtKB-KW"/>
</dbReference>
<dbReference type="GO" id="GO:0008360">
    <property type="term" value="P:regulation of cell shape"/>
    <property type="evidence" value="ECO:0007669"/>
    <property type="project" value="UniProtKB-KW"/>
</dbReference>
<dbReference type="GO" id="GO:0046677">
    <property type="term" value="P:response to antibiotic"/>
    <property type="evidence" value="ECO:0007669"/>
    <property type="project" value="UniProtKB-UniRule"/>
</dbReference>
<dbReference type="HAMAP" id="MF_01006">
    <property type="entry name" value="Undec_diphosphatase"/>
    <property type="match status" value="1"/>
</dbReference>
<dbReference type="InterPro" id="IPR003824">
    <property type="entry name" value="UppP"/>
</dbReference>
<dbReference type="PANTHER" id="PTHR30622">
    <property type="entry name" value="UNDECAPRENYL-DIPHOSPHATASE"/>
    <property type="match status" value="1"/>
</dbReference>
<dbReference type="PANTHER" id="PTHR30622:SF4">
    <property type="entry name" value="UNDECAPRENYL-DIPHOSPHATASE"/>
    <property type="match status" value="1"/>
</dbReference>
<dbReference type="Pfam" id="PF02673">
    <property type="entry name" value="BacA"/>
    <property type="match status" value="1"/>
</dbReference>
<evidence type="ECO:0000255" key="1">
    <source>
        <dbReference type="HAMAP-Rule" id="MF_01006"/>
    </source>
</evidence>
<keyword id="KW-0046">Antibiotic resistance</keyword>
<keyword id="KW-0997">Cell inner membrane</keyword>
<keyword id="KW-1003">Cell membrane</keyword>
<keyword id="KW-0133">Cell shape</keyword>
<keyword id="KW-0961">Cell wall biogenesis/degradation</keyword>
<keyword id="KW-0378">Hydrolase</keyword>
<keyword id="KW-0472">Membrane</keyword>
<keyword id="KW-0573">Peptidoglycan synthesis</keyword>
<keyword id="KW-1185">Reference proteome</keyword>
<keyword id="KW-0812">Transmembrane</keyword>
<keyword id="KW-1133">Transmembrane helix</keyword>
<gene>
    <name evidence="1" type="primary">uppP1</name>
    <name type="ordered locus">Rru_A0017</name>
</gene>
<accession>Q2RYH3</accession>
<proteinExistence type="inferred from homology"/>